<sequence>MKNKSLFEVIKIGKVEVXXKIXMAVMGAFG</sequence>
<reference key="1">
    <citation type="journal article" date="1985" name="Biol. Chem. Hoppe-Seyler">
        <title>Structure of enoate reductase from a Clostridium tyrobutyricum (C. spec. La1).</title>
        <authorList>
            <person name="Kuno S."/>
            <person name="Bacher A."/>
            <person name="Simon H."/>
        </authorList>
    </citation>
    <scope>PROTEIN SEQUENCE</scope>
</reference>
<name>2ENR_CLOTY</name>
<protein>
    <recommendedName>
        <fullName>2-enoate reductase</fullName>
        <ecNumber>1.3.1.31</ecNumber>
    </recommendedName>
</protein>
<keyword id="KW-0903">Direct protein sequencing</keyword>
<keyword id="KW-0285">Flavoprotein</keyword>
<keyword id="KW-0408">Iron</keyword>
<keyword id="KW-0411">Iron-sulfur</keyword>
<keyword id="KW-0479">Metal-binding</keyword>
<keyword id="KW-0520">NAD</keyword>
<keyword id="KW-0560">Oxidoreductase</keyword>
<accession>P11887</accession>
<dbReference type="EC" id="1.3.1.31"/>
<dbReference type="PIR" id="A22498">
    <property type="entry name" value="A22498"/>
</dbReference>
<dbReference type="STRING" id="1519.CTK_C06040"/>
<dbReference type="GO" id="GO:0047540">
    <property type="term" value="F:2-enoate reductase activity"/>
    <property type="evidence" value="ECO:0007669"/>
    <property type="project" value="UniProtKB-EC"/>
</dbReference>
<dbReference type="GO" id="GO:0051536">
    <property type="term" value="F:iron-sulfur cluster binding"/>
    <property type="evidence" value="ECO:0007669"/>
    <property type="project" value="UniProtKB-KW"/>
</dbReference>
<dbReference type="GO" id="GO:0046872">
    <property type="term" value="F:metal ion binding"/>
    <property type="evidence" value="ECO:0007669"/>
    <property type="project" value="UniProtKB-KW"/>
</dbReference>
<feature type="chain" id="PRO_0000064360" description="2-enoate reductase">
    <location>
        <begin position="1"/>
        <end position="30" status="greater than"/>
    </location>
</feature>
<feature type="non-terminal residue">
    <location>
        <position position="30"/>
    </location>
</feature>
<comment type="function">
    <text>Involved in fermentation of amino acids (Stickland reaction) such as leucine, isoleucine, valine and phenylalanine.</text>
</comment>
<comment type="catalytic activity">
    <reaction>
        <text>butanoate + NAD(+) = (2E)-2-butenoate + NADH + H(+)</text>
        <dbReference type="Rhea" id="RHEA:10200"/>
        <dbReference type="ChEBI" id="CHEBI:15378"/>
        <dbReference type="ChEBI" id="CHEBI:17968"/>
        <dbReference type="ChEBI" id="CHEBI:35899"/>
        <dbReference type="ChEBI" id="CHEBI:57540"/>
        <dbReference type="ChEBI" id="CHEBI:57945"/>
        <dbReference type="EC" id="1.3.1.31"/>
    </reaction>
</comment>
<comment type="cofactor">
    <cofactor>
        <name>iron-sulfur cluster</name>
        <dbReference type="ChEBI" id="CHEBI:30408"/>
    </cofactor>
</comment>
<comment type="cofactor">
    <cofactor>
        <name>FAD</name>
        <dbReference type="ChEBI" id="CHEBI:57692"/>
    </cofactor>
    <cofactor>
        <name>FMN</name>
        <dbReference type="ChEBI" id="CHEBI:58210"/>
    </cofactor>
</comment>
<comment type="subunit">
    <text>Dodecamer; tetramer of trimers.</text>
</comment>
<proteinExistence type="evidence at protein level"/>
<organism>
    <name type="scientific">Clostridium tyrobutyricum</name>
    <dbReference type="NCBI Taxonomy" id="1519"/>
    <lineage>
        <taxon>Bacteria</taxon>
        <taxon>Bacillati</taxon>
        <taxon>Bacillota</taxon>
        <taxon>Clostridia</taxon>
        <taxon>Eubacteriales</taxon>
        <taxon>Clostridiaceae</taxon>
        <taxon>Clostridium</taxon>
    </lineage>
</organism>